<feature type="chain" id="PRO_0000109310" description="Fatty acid oxidation complex subunit alpha">
    <location>
        <begin position="1"/>
        <end position="708"/>
    </location>
</feature>
<feature type="region of interest" description="Enoyl-CoA hydratase" evidence="1">
    <location>
        <begin position="1"/>
        <end position="191"/>
    </location>
</feature>
<feature type="region of interest" description="3-hydroxyacyl-CoA dehydrogenase" evidence="1">
    <location>
        <begin position="311"/>
        <end position="708"/>
    </location>
</feature>
<feature type="site" description="Important for catalytic activity" evidence="1">
    <location>
        <position position="119"/>
    </location>
</feature>
<feature type="site" description="Important for catalytic activity" evidence="1">
    <location>
        <position position="141"/>
    </location>
</feature>
<comment type="function">
    <text evidence="1">Catalyzes the formation of a hydroxyacyl-CoA by addition of water on enoyl-CoA. Also exhibits 3-hydroxyacyl-CoA epimerase and 3-hydroxyacyl-CoA dehydrogenase activities.</text>
</comment>
<comment type="catalytic activity">
    <reaction evidence="1">
        <text>a (3S)-3-hydroxyacyl-CoA = a (2E)-enoyl-CoA + H2O</text>
        <dbReference type="Rhea" id="RHEA:16105"/>
        <dbReference type="ChEBI" id="CHEBI:15377"/>
        <dbReference type="ChEBI" id="CHEBI:57318"/>
        <dbReference type="ChEBI" id="CHEBI:58856"/>
        <dbReference type="EC" id="4.2.1.17"/>
    </reaction>
</comment>
<comment type="catalytic activity">
    <reaction evidence="1">
        <text>a 4-saturated-(3S)-3-hydroxyacyl-CoA = a (3E)-enoyl-CoA + H2O</text>
        <dbReference type="Rhea" id="RHEA:20724"/>
        <dbReference type="ChEBI" id="CHEBI:15377"/>
        <dbReference type="ChEBI" id="CHEBI:58521"/>
        <dbReference type="ChEBI" id="CHEBI:137480"/>
        <dbReference type="EC" id="4.2.1.17"/>
    </reaction>
</comment>
<comment type="catalytic activity">
    <reaction evidence="1">
        <text>a (3S)-3-hydroxyacyl-CoA + NAD(+) = a 3-oxoacyl-CoA + NADH + H(+)</text>
        <dbReference type="Rhea" id="RHEA:22432"/>
        <dbReference type="ChEBI" id="CHEBI:15378"/>
        <dbReference type="ChEBI" id="CHEBI:57318"/>
        <dbReference type="ChEBI" id="CHEBI:57540"/>
        <dbReference type="ChEBI" id="CHEBI:57945"/>
        <dbReference type="ChEBI" id="CHEBI:90726"/>
        <dbReference type="EC" id="1.1.1.35"/>
    </reaction>
</comment>
<comment type="catalytic activity">
    <reaction evidence="1">
        <text>(3S)-3-hydroxybutanoyl-CoA = (3R)-3-hydroxybutanoyl-CoA</text>
        <dbReference type="Rhea" id="RHEA:21760"/>
        <dbReference type="ChEBI" id="CHEBI:57315"/>
        <dbReference type="ChEBI" id="CHEBI:57316"/>
        <dbReference type="EC" id="5.1.2.3"/>
    </reaction>
</comment>
<comment type="pathway">
    <text evidence="1">Lipid metabolism; fatty acid beta-oxidation.</text>
</comment>
<comment type="subunit">
    <text evidence="1">Heterotetramer of two alpha chains (FadJ) and two beta chains (FadI).</text>
</comment>
<comment type="subcellular location">
    <subcellularLocation>
        <location evidence="1">Cytoplasm</location>
    </subcellularLocation>
</comment>
<comment type="similarity">
    <text evidence="1">In the N-terminal section; belongs to the enoyl-CoA hydratase/isomerase family.</text>
</comment>
<comment type="similarity">
    <text evidence="1">In the central section; belongs to the 3-hydroxyacyl-CoA dehydrogenase family.</text>
</comment>
<comment type="sequence caution" evidence="2">
    <conflict type="erroneous initiation">
        <sequence resource="EMBL-CDS" id="AAF94206"/>
    </conflict>
</comment>
<keyword id="KW-0963">Cytoplasm</keyword>
<keyword id="KW-0276">Fatty acid metabolism</keyword>
<keyword id="KW-0413">Isomerase</keyword>
<keyword id="KW-0442">Lipid degradation</keyword>
<keyword id="KW-0443">Lipid metabolism</keyword>
<keyword id="KW-0456">Lyase</keyword>
<keyword id="KW-0511">Multifunctional enzyme</keyword>
<keyword id="KW-0520">NAD</keyword>
<keyword id="KW-0560">Oxidoreductase</keyword>
<keyword id="KW-1185">Reference proteome</keyword>
<reference key="1">
    <citation type="journal article" date="2000" name="Nature">
        <title>DNA sequence of both chromosomes of the cholera pathogen Vibrio cholerae.</title>
        <authorList>
            <person name="Heidelberg J.F."/>
            <person name="Eisen J.A."/>
            <person name="Nelson W.C."/>
            <person name="Clayton R.A."/>
            <person name="Gwinn M.L."/>
            <person name="Dodson R.J."/>
            <person name="Haft D.H."/>
            <person name="Hickey E.K."/>
            <person name="Peterson J.D."/>
            <person name="Umayam L.A."/>
            <person name="Gill S.R."/>
            <person name="Nelson K.E."/>
            <person name="Read T.D."/>
            <person name="Tettelin H."/>
            <person name="Richardson D.L."/>
            <person name="Ermolaeva M.D."/>
            <person name="Vamathevan J.J."/>
            <person name="Bass S."/>
            <person name="Qin H."/>
            <person name="Dragoi I."/>
            <person name="Sellers P."/>
            <person name="McDonald L.A."/>
            <person name="Utterback T.R."/>
            <person name="Fleischmann R.D."/>
            <person name="Nierman W.C."/>
            <person name="White O."/>
            <person name="Salzberg S.L."/>
            <person name="Smith H.O."/>
            <person name="Colwell R.R."/>
            <person name="Mekalanos J.J."/>
            <person name="Venter J.C."/>
            <person name="Fraser C.M."/>
        </authorList>
    </citation>
    <scope>NUCLEOTIDE SEQUENCE [LARGE SCALE GENOMIC DNA]</scope>
    <source>
        <strain>ATCC 39315 / El Tor Inaba N16961</strain>
    </source>
</reference>
<accession>Q9KT58</accession>
<protein>
    <recommendedName>
        <fullName evidence="1">Fatty acid oxidation complex subunit alpha</fullName>
    </recommendedName>
    <domain>
        <recommendedName>
            <fullName evidence="1">Enoyl-CoA hydratase/3-hydroxybutyryl-CoA epimerase</fullName>
            <ecNumber evidence="1">4.2.1.17</ecNumber>
            <ecNumber evidence="1">5.1.2.3</ecNumber>
        </recommendedName>
    </domain>
    <domain>
        <recommendedName>
            <fullName evidence="1">3-hydroxyacyl-CoA dehydrogenase</fullName>
            <ecNumber evidence="1">1.1.1.35</ecNumber>
        </recommendedName>
    </domain>
</protein>
<evidence type="ECO:0000255" key="1">
    <source>
        <dbReference type="HAMAP-Rule" id="MF_01617"/>
    </source>
</evidence>
<evidence type="ECO:0000305" key="2"/>
<sequence length="708" mass="77357">MDNNNAFQLSFDEQHYAWLAIDVPGEKMNTLQAAFAEEMQAVFATLNEKRGQIKGLIIHSLKPDNFIAGADVRMLEACQSVHEAQALASQGQQMFQQLADLPFPVVAAIHGPCLGGGLELALACDYRVCTEDEVTRLGLPEVMLGLLPGSGGTQRLPRLIGLLPALDLILTGKQLRAKKAKKLGVVDACVPHSVLLDVAKRLLEEKGHKKRAQVTLPIKEKLLANTDLGRKLIFDQAAKKTQQKTRGNYPAAQAILEVIQYGLEKGMHAGLEYEAKRFAELVMTRESKALRSIFFATTEMKKDLGADAKPAPVAAVGVLGGGLMGAGISHVTVAKAKTSVRIKDVANDGVLNALNYNYKLFDKQRQRKILTKAQLQAQMSQLSGGTGFVGFDRCDVVIEAVFEDLKLKQQMVADIEANAKPTTIFATNTSSLPIHQIASQAQRPQNIVGLHYFSPVEKMPLVEVIPHATTSDETIATVVTLARKQGKTPIVVKDCAGFYVNRILAPYMNEAAQVLMAGEPIEKLDAALLDFGFPVGPITLLDEVGVDIGAKIMPILVKELGPRFQGPDVFDVLLKDNRKGRKSGKGFYTYKGSKKKEVDKSVYKLLKLTPESKLNDKEIAMRCLLPMLNEAVRCLDEGIIRSARDGDMGAIFGIGFPPFLGGPFRYMDTLGLTKVVEMMNQHTEKYGERFAPCDGLLTRAGLGEKFYP</sequence>
<name>FADJ_VIBCH</name>
<proteinExistence type="inferred from homology"/>
<organism>
    <name type="scientific">Vibrio cholerae serotype O1 (strain ATCC 39315 / El Tor Inaba N16961)</name>
    <dbReference type="NCBI Taxonomy" id="243277"/>
    <lineage>
        <taxon>Bacteria</taxon>
        <taxon>Pseudomonadati</taxon>
        <taxon>Pseudomonadota</taxon>
        <taxon>Gammaproteobacteria</taxon>
        <taxon>Vibrionales</taxon>
        <taxon>Vibrionaceae</taxon>
        <taxon>Vibrio</taxon>
    </lineage>
</organism>
<dbReference type="EC" id="4.2.1.17" evidence="1"/>
<dbReference type="EC" id="5.1.2.3" evidence="1"/>
<dbReference type="EC" id="1.1.1.35" evidence="1"/>
<dbReference type="EMBL" id="AE003852">
    <property type="protein sequence ID" value="AAF94206.1"/>
    <property type="status" value="ALT_INIT"/>
    <property type="molecule type" value="Genomic_DNA"/>
</dbReference>
<dbReference type="PIR" id="F82248">
    <property type="entry name" value="F82248"/>
</dbReference>
<dbReference type="RefSeq" id="NP_230692.2">
    <property type="nucleotide sequence ID" value="NC_002505.1"/>
</dbReference>
<dbReference type="RefSeq" id="WP_000369794.1">
    <property type="nucleotide sequence ID" value="NZ_LT906614.1"/>
</dbReference>
<dbReference type="SMR" id="Q9KT58"/>
<dbReference type="STRING" id="243277.VC_1047"/>
<dbReference type="DNASU" id="2614317"/>
<dbReference type="EnsemblBacteria" id="AAF94206">
    <property type="protein sequence ID" value="AAF94206"/>
    <property type="gene ID" value="VC_1047"/>
</dbReference>
<dbReference type="KEGG" id="vch:VC_1047"/>
<dbReference type="PATRIC" id="fig|243277.26.peg.999"/>
<dbReference type="eggNOG" id="COG1024">
    <property type="taxonomic scope" value="Bacteria"/>
</dbReference>
<dbReference type="eggNOG" id="COG1250">
    <property type="taxonomic scope" value="Bacteria"/>
</dbReference>
<dbReference type="HOGENOM" id="CLU_009834_16_3_6"/>
<dbReference type="UniPathway" id="UPA00659"/>
<dbReference type="Proteomes" id="UP000000584">
    <property type="component" value="Chromosome 1"/>
</dbReference>
<dbReference type="GO" id="GO:0005737">
    <property type="term" value="C:cytoplasm"/>
    <property type="evidence" value="ECO:0007669"/>
    <property type="project" value="UniProtKB-SubCell"/>
</dbReference>
<dbReference type="GO" id="GO:0008692">
    <property type="term" value="F:3-hydroxybutyryl-CoA epimerase activity"/>
    <property type="evidence" value="ECO:0007669"/>
    <property type="project" value="UniProtKB-UniRule"/>
</dbReference>
<dbReference type="GO" id="GO:0004300">
    <property type="term" value="F:enoyl-CoA hydratase activity"/>
    <property type="evidence" value="ECO:0000318"/>
    <property type="project" value="GO_Central"/>
</dbReference>
<dbReference type="GO" id="GO:0016509">
    <property type="term" value="F:long-chain-3-hydroxyacyl-CoA dehydrogenase activity"/>
    <property type="evidence" value="ECO:0000318"/>
    <property type="project" value="GO_Central"/>
</dbReference>
<dbReference type="GO" id="GO:0070403">
    <property type="term" value="F:NAD+ binding"/>
    <property type="evidence" value="ECO:0007669"/>
    <property type="project" value="InterPro"/>
</dbReference>
<dbReference type="GO" id="GO:0006635">
    <property type="term" value="P:fatty acid beta-oxidation"/>
    <property type="evidence" value="ECO:0000318"/>
    <property type="project" value="GO_Central"/>
</dbReference>
<dbReference type="CDD" id="cd06558">
    <property type="entry name" value="crotonase-like"/>
    <property type="match status" value="1"/>
</dbReference>
<dbReference type="FunFam" id="3.90.226.10:FF:000011">
    <property type="entry name" value="Fatty acid oxidation complex subunit alpha"/>
    <property type="match status" value="1"/>
</dbReference>
<dbReference type="FunFam" id="3.40.50.720:FF:000009">
    <property type="entry name" value="Fatty oxidation complex, alpha subunit"/>
    <property type="match status" value="1"/>
</dbReference>
<dbReference type="Gene3D" id="1.10.1040.50">
    <property type="match status" value="1"/>
</dbReference>
<dbReference type="Gene3D" id="3.90.226.10">
    <property type="entry name" value="2-enoyl-CoA Hydratase, Chain A, domain 1"/>
    <property type="match status" value="1"/>
</dbReference>
<dbReference type="Gene3D" id="3.40.50.720">
    <property type="entry name" value="NAD(P)-binding Rossmann-like Domain"/>
    <property type="match status" value="1"/>
</dbReference>
<dbReference type="HAMAP" id="MF_01617">
    <property type="entry name" value="FadJ"/>
    <property type="match status" value="1"/>
</dbReference>
<dbReference type="InterPro" id="IPR006180">
    <property type="entry name" value="3-OHacyl-CoA_DH_CS"/>
</dbReference>
<dbReference type="InterPro" id="IPR006176">
    <property type="entry name" value="3-OHacyl-CoA_DH_NAD-bd"/>
</dbReference>
<dbReference type="InterPro" id="IPR006108">
    <property type="entry name" value="3HC_DH_C"/>
</dbReference>
<dbReference type="InterPro" id="IPR008927">
    <property type="entry name" value="6-PGluconate_DH-like_C_sf"/>
</dbReference>
<dbReference type="InterPro" id="IPR029045">
    <property type="entry name" value="ClpP/crotonase-like_dom_sf"/>
</dbReference>
<dbReference type="InterPro" id="IPR018376">
    <property type="entry name" value="Enoyl-CoA_hyd/isom_CS"/>
</dbReference>
<dbReference type="InterPro" id="IPR001753">
    <property type="entry name" value="Enoyl-CoA_hydra/iso"/>
</dbReference>
<dbReference type="InterPro" id="IPR050136">
    <property type="entry name" value="FA_oxidation_alpha_subunit"/>
</dbReference>
<dbReference type="InterPro" id="IPR012802">
    <property type="entry name" value="FadJ"/>
</dbReference>
<dbReference type="InterPro" id="IPR036291">
    <property type="entry name" value="NAD(P)-bd_dom_sf"/>
</dbReference>
<dbReference type="NCBIfam" id="TIGR02440">
    <property type="entry name" value="FadJ"/>
    <property type="match status" value="1"/>
</dbReference>
<dbReference type="NCBIfam" id="NF008363">
    <property type="entry name" value="PRK11154.1"/>
    <property type="match status" value="1"/>
</dbReference>
<dbReference type="PANTHER" id="PTHR43612">
    <property type="entry name" value="TRIFUNCTIONAL ENZYME SUBUNIT ALPHA"/>
    <property type="match status" value="1"/>
</dbReference>
<dbReference type="PANTHER" id="PTHR43612:SF3">
    <property type="entry name" value="TRIFUNCTIONAL ENZYME SUBUNIT ALPHA, MITOCHONDRIAL"/>
    <property type="match status" value="1"/>
</dbReference>
<dbReference type="Pfam" id="PF00725">
    <property type="entry name" value="3HCDH"/>
    <property type="match status" value="2"/>
</dbReference>
<dbReference type="Pfam" id="PF02737">
    <property type="entry name" value="3HCDH_N"/>
    <property type="match status" value="1"/>
</dbReference>
<dbReference type="Pfam" id="PF00378">
    <property type="entry name" value="ECH_1"/>
    <property type="match status" value="1"/>
</dbReference>
<dbReference type="SUPFAM" id="SSF48179">
    <property type="entry name" value="6-phosphogluconate dehydrogenase C-terminal domain-like"/>
    <property type="match status" value="2"/>
</dbReference>
<dbReference type="SUPFAM" id="SSF52096">
    <property type="entry name" value="ClpP/crotonase"/>
    <property type="match status" value="1"/>
</dbReference>
<dbReference type="SUPFAM" id="SSF51735">
    <property type="entry name" value="NAD(P)-binding Rossmann-fold domains"/>
    <property type="match status" value="1"/>
</dbReference>
<dbReference type="PROSITE" id="PS00067">
    <property type="entry name" value="3HCDH"/>
    <property type="match status" value="1"/>
</dbReference>
<dbReference type="PROSITE" id="PS00166">
    <property type="entry name" value="ENOYL_COA_HYDRATASE"/>
    <property type="match status" value="1"/>
</dbReference>
<gene>
    <name evidence="1" type="primary">fadJ</name>
    <name type="ordered locus">VC_1047</name>
</gene>